<reference key="1">
    <citation type="journal article" date="2005" name="Science">
        <title>The transcriptional landscape of the mammalian genome.</title>
        <authorList>
            <person name="Carninci P."/>
            <person name="Kasukawa T."/>
            <person name="Katayama S."/>
            <person name="Gough J."/>
            <person name="Frith M.C."/>
            <person name="Maeda N."/>
            <person name="Oyama R."/>
            <person name="Ravasi T."/>
            <person name="Lenhard B."/>
            <person name="Wells C."/>
            <person name="Kodzius R."/>
            <person name="Shimokawa K."/>
            <person name="Bajic V.B."/>
            <person name="Brenner S.E."/>
            <person name="Batalov S."/>
            <person name="Forrest A.R."/>
            <person name="Zavolan M."/>
            <person name="Davis M.J."/>
            <person name="Wilming L.G."/>
            <person name="Aidinis V."/>
            <person name="Allen J.E."/>
            <person name="Ambesi-Impiombato A."/>
            <person name="Apweiler R."/>
            <person name="Aturaliya R.N."/>
            <person name="Bailey T.L."/>
            <person name="Bansal M."/>
            <person name="Baxter L."/>
            <person name="Beisel K.W."/>
            <person name="Bersano T."/>
            <person name="Bono H."/>
            <person name="Chalk A.M."/>
            <person name="Chiu K.P."/>
            <person name="Choudhary V."/>
            <person name="Christoffels A."/>
            <person name="Clutterbuck D.R."/>
            <person name="Crowe M.L."/>
            <person name="Dalla E."/>
            <person name="Dalrymple B.P."/>
            <person name="de Bono B."/>
            <person name="Della Gatta G."/>
            <person name="di Bernardo D."/>
            <person name="Down T."/>
            <person name="Engstrom P."/>
            <person name="Fagiolini M."/>
            <person name="Faulkner G."/>
            <person name="Fletcher C.F."/>
            <person name="Fukushima T."/>
            <person name="Furuno M."/>
            <person name="Futaki S."/>
            <person name="Gariboldi M."/>
            <person name="Georgii-Hemming P."/>
            <person name="Gingeras T.R."/>
            <person name="Gojobori T."/>
            <person name="Green R.E."/>
            <person name="Gustincich S."/>
            <person name="Harbers M."/>
            <person name="Hayashi Y."/>
            <person name="Hensch T.K."/>
            <person name="Hirokawa N."/>
            <person name="Hill D."/>
            <person name="Huminiecki L."/>
            <person name="Iacono M."/>
            <person name="Ikeo K."/>
            <person name="Iwama A."/>
            <person name="Ishikawa T."/>
            <person name="Jakt M."/>
            <person name="Kanapin A."/>
            <person name="Katoh M."/>
            <person name="Kawasawa Y."/>
            <person name="Kelso J."/>
            <person name="Kitamura H."/>
            <person name="Kitano H."/>
            <person name="Kollias G."/>
            <person name="Krishnan S.P."/>
            <person name="Kruger A."/>
            <person name="Kummerfeld S.K."/>
            <person name="Kurochkin I.V."/>
            <person name="Lareau L.F."/>
            <person name="Lazarevic D."/>
            <person name="Lipovich L."/>
            <person name="Liu J."/>
            <person name="Liuni S."/>
            <person name="McWilliam S."/>
            <person name="Madan Babu M."/>
            <person name="Madera M."/>
            <person name="Marchionni L."/>
            <person name="Matsuda H."/>
            <person name="Matsuzawa S."/>
            <person name="Miki H."/>
            <person name="Mignone F."/>
            <person name="Miyake S."/>
            <person name="Morris K."/>
            <person name="Mottagui-Tabar S."/>
            <person name="Mulder N."/>
            <person name="Nakano N."/>
            <person name="Nakauchi H."/>
            <person name="Ng P."/>
            <person name="Nilsson R."/>
            <person name="Nishiguchi S."/>
            <person name="Nishikawa S."/>
            <person name="Nori F."/>
            <person name="Ohara O."/>
            <person name="Okazaki Y."/>
            <person name="Orlando V."/>
            <person name="Pang K.C."/>
            <person name="Pavan W.J."/>
            <person name="Pavesi G."/>
            <person name="Pesole G."/>
            <person name="Petrovsky N."/>
            <person name="Piazza S."/>
            <person name="Reed J."/>
            <person name="Reid J.F."/>
            <person name="Ring B.Z."/>
            <person name="Ringwald M."/>
            <person name="Rost B."/>
            <person name="Ruan Y."/>
            <person name="Salzberg S.L."/>
            <person name="Sandelin A."/>
            <person name="Schneider C."/>
            <person name="Schoenbach C."/>
            <person name="Sekiguchi K."/>
            <person name="Semple C.A."/>
            <person name="Seno S."/>
            <person name="Sessa L."/>
            <person name="Sheng Y."/>
            <person name="Shibata Y."/>
            <person name="Shimada H."/>
            <person name="Shimada K."/>
            <person name="Silva D."/>
            <person name="Sinclair B."/>
            <person name="Sperling S."/>
            <person name="Stupka E."/>
            <person name="Sugiura K."/>
            <person name="Sultana R."/>
            <person name="Takenaka Y."/>
            <person name="Taki K."/>
            <person name="Tammoja K."/>
            <person name="Tan S.L."/>
            <person name="Tang S."/>
            <person name="Taylor M.S."/>
            <person name="Tegner J."/>
            <person name="Teichmann S.A."/>
            <person name="Ueda H.R."/>
            <person name="van Nimwegen E."/>
            <person name="Verardo R."/>
            <person name="Wei C.L."/>
            <person name="Yagi K."/>
            <person name="Yamanishi H."/>
            <person name="Zabarovsky E."/>
            <person name="Zhu S."/>
            <person name="Zimmer A."/>
            <person name="Hide W."/>
            <person name="Bult C."/>
            <person name="Grimmond S.M."/>
            <person name="Teasdale R.D."/>
            <person name="Liu E.T."/>
            <person name="Brusic V."/>
            <person name="Quackenbush J."/>
            <person name="Wahlestedt C."/>
            <person name="Mattick J.S."/>
            <person name="Hume D.A."/>
            <person name="Kai C."/>
            <person name="Sasaki D."/>
            <person name="Tomaru Y."/>
            <person name="Fukuda S."/>
            <person name="Kanamori-Katayama M."/>
            <person name="Suzuki M."/>
            <person name="Aoki J."/>
            <person name="Arakawa T."/>
            <person name="Iida J."/>
            <person name="Imamura K."/>
            <person name="Itoh M."/>
            <person name="Kato T."/>
            <person name="Kawaji H."/>
            <person name="Kawagashira N."/>
            <person name="Kawashima T."/>
            <person name="Kojima M."/>
            <person name="Kondo S."/>
            <person name="Konno H."/>
            <person name="Nakano K."/>
            <person name="Ninomiya N."/>
            <person name="Nishio T."/>
            <person name="Okada M."/>
            <person name="Plessy C."/>
            <person name="Shibata K."/>
            <person name="Shiraki T."/>
            <person name="Suzuki S."/>
            <person name="Tagami M."/>
            <person name="Waki K."/>
            <person name="Watahiki A."/>
            <person name="Okamura-Oho Y."/>
            <person name="Suzuki H."/>
            <person name="Kawai J."/>
            <person name="Hayashizaki Y."/>
        </authorList>
    </citation>
    <scope>NUCLEOTIDE SEQUENCE [LARGE SCALE MRNA]</scope>
    <source>
        <strain>C57BL/6J</strain>
        <tissue>Kidney</tissue>
        <tissue>Pancreas</tissue>
    </source>
</reference>
<reference key="2">
    <citation type="journal article" date="2004" name="Genome Res.">
        <title>The status, quality, and expansion of the NIH full-length cDNA project: the Mammalian Gene Collection (MGC).</title>
        <authorList>
            <consortium name="The MGC Project Team"/>
        </authorList>
    </citation>
    <scope>NUCLEOTIDE SEQUENCE [LARGE SCALE MRNA]</scope>
    <source>
        <strain>FVB/N</strain>
        <tissue>Colon</tissue>
    </source>
</reference>
<reference key="3">
    <citation type="journal article" date="2022" name="Nat. Commun.">
        <title>Adipocyte lysoplasmalogenase TMEM86A regulates plasmalogen homeostasis and protein kinase A-dependent energy metabolism.</title>
        <authorList>
            <person name="Cho Y.K."/>
            <person name="Yoon Y.C."/>
            <person name="Im H."/>
            <person name="Son Y."/>
            <person name="Kim M."/>
            <person name="Saha A."/>
            <person name="Choi C."/>
            <person name="Lee J."/>
            <person name="Lee S."/>
            <person name="Kim J.H."/>
            <person name="Kang Y.P."/>
            <person name="Jung Y.S."/>
            <person name="Ha H.K."/>
            <person name="Seong J.K."/>
            <person name="Granneman J.G."/>
            <person name="Kwon S.W."/>
            <person name="Lee Y.H."/>
        </authorList>
    </citation>
    <scope>FUNCTION</scope>
    <scope>CATALYTIC ACTIVITY</scope>
    <scope>SUBCELLULAR LOCATION</scope>
    <scope>TISSUE SPECIFICITY</scope>
    <scope>INDUCTION</scope>
    <scope>MUTAGENESIS OF ASP-82 AND ASP-190</scope>
</reference>
<reference key="4">
    <citation type="journal article" date="2023" name="J. Lipid Res.">
        <title>Sterol-regulated transmembrane protein TMEM86a couples LXR signaling to regulation of lysoplasmalogens in macrophages.</title>
        <authorList>
            <person name="van Wouw S.A.E."/>
            <person name="van den Berg M."/>
            <person name="El Ouraoui M."/>
            <person name="Meurs A."/>
            <person name="Kingma J."/>
            <person name="Ottenhoff R."/>
            <person name="Loix M."/>
            <person name="Hoeksema M.A."/>
            <person name="Prange K."/>
            <person name="Pasterkamp G."/>
            <person name="Hendriks J.J.A."/>
            <person name="Bogie J.F.J."/>
            <person name="van Klinken J.B."/>
            <person name="Vaz F.M."/>
            <person name="Jongejan A."/>
            <person name="de Winther M.P.J."/>
            <person name="Zelcer N."/>
        </authorList>
    </citation>
    <scope>FUNCTION</scope>
    <scope>CATALYTIC ACTIVITY</scope>
    <scope>SUBCELLULAR LOCATION</scope>
    <scope>DISRUPTION PHENOTYPE</scope>
    <scope>TISSUE SPECIFICITY</scope>
    <scope>INDUCTION</scope>
    <scope>MUTAGENESIS OF HIS-104 AND ASP-190</scope>
</reference>
<evidence type="ECO:0000255" key="1"/>
<evidence type="ECO:0000269" key="2">
    <source>
    </source>
</evidence>
<evidence type="ECO:0000269" key="3">
    <source>
    </source>
</evidence>
<evidence type="ECO:0000305" key="4"/>
<comment type="function">
    <text evidence="2 3">Catalyzes the hydrolysis of the vinyl ether bond of choline or ethanolamine lysoplasmalogens, forming fatty aldehyde and glycerophosphocholine or glycerophosphoethanolamine, respectively and is specific for the sn-2-deacylated (lyso) form of plasmalogen (PubMed:35835749, PubMed:36592658). Plays an important role in lysoplasmalogen metabolism in the adipocyte tissue and macrophages (PubMed:35835749, PubMed:36592658).</text>
</comment>
<comment type="catalytic activity">
    <reaction evidence="2 3">
        <text>a 1-O-(1Z-alkenyl)-sn-glycero-3-phosphocholine + H2O = a 2,3-saturated aldehyde + sn-glycerol 3-phosphocholine</text>
        <dbReference type="Rhea" id="RHEA:22544"/>
        <dbReference type="ChEBI" id="CHEBI:15377"/>
        <dbReference type="ChEBI" id="CHEBI:16870"/>
        <dbReference type="ChEBI" id="CHEBI:73359"/>
        <dbReference type="ChEBI" id="CHEBI:77287"/>
        <dbReference type="EC" id="3.3.2.2"/>
    </reaction>
</comment>
<comment type="catalytic activity">
    <reaction evidence="2 3">
        <text>a 1-O-(1Z-alkenyl)-sn-glycero-3-phosphoethanolamine + H2O = a 2,3-saturated aldehyde + sn-glycero-3-phosphoethanolamine</text>
        <dbReference type="Rhea" id="RHEA:16905"/>
        <dbReference type="ChEBI" id="CHEBI:15377"/>
        <dbReference type="ChEBI" id="CHEBI:73359"/>
        <dbReference type="ChEBI" id="CHEBI:77288"/>
        <dbReference type="ChEBI" id="CHEBI:143890"/>
        <dbReference type="EC" id="3.3.2.2"/>
    </reaction>
</comment>
<comment type="subcellular location">
    <subcellularLocation>
        <location evidence="2 3">Endoplasmic reticulum membrane</location>
        <topology evidence="1">Multi-pass membrane protein</topology>
    </subcellularLocation>
</comment>
<comment type="tissue specificity">
    <text evidence="2 3">Highly expressed in the jejunum, white adipose tissue, kidney and macrophages.</text>
</comment>
<comment type="induction">
    <text evidence="2 3">Sterol-inducible in the macrophages and the induction is mediated by the liver X receptor (LXR) (PubMed:36592658). Up-regulated by high-fat diet in the white adipose tissue (PubMed:35835749).</text>
</comment>
<comment type="disruption phenotype">
    <text evidence="2">Adipocyte-specific knockout mice show elevated levels of lysoplasmalogens in adipose tissue and enhanced PKA-signaling pathway and mitochondrial oxidative metabolism in adipose tissue.</text>
</comment>
<comment type="similarity">
    <text evidence="4">Belongs to the TMEM86 family.</text>
</comment>
<dbReference type="EC" id="3.3.2.2" evidence="3"/>
<dbReference type="EMBL" id="AK007864">
    <property type="protein sequence ID" value="BAB25316.1"/>
    <property type="molecule type" value="mRNA"/>
</dbReference>
<dbReference type="EMBL" id="AK075589">
    <property type="protein sequence ID" value="BAC35840.1"/>
    <property type="molecule type" value="mRNA"/>
</dbReference>
<dbReference type="EMBL" id="BC056619">
    <property type="protein sequence ID" value="AAH56619.1"/>
    <property type="molecule type" value="mRNA"/>
</dbReference>
<dbReference type="CCDS" id="CCDS39966.1"/>
<dbReference type="RefSeq" id="NP_080712.1">
    <property type="nucleotide sequence ID" value="NM_026436.3"/>
</dbReference>
<dbReference type="FunCoup" id="Q9D8N3">
    <property type="interactions" value="171"/>
</dbReference>
<dbReference type="STRING" id="10090.ENSMUSP00000010451"/>
<dbReference type="PaxDb" id="10090-ENSMUSP00000010451"/>
<dbReference type="ProteomicsDB" id="259567"/>
<dbReference type="Antibodypedia" id="71292">
    <property type="antibodies" value="16 antibodies from 8 providers"/>
</dbReference>
<dbReference type="Ensembl" id="ENSMUST00000010451.8">
    <property type="protein sequence ID" value="ENSMUSP00000010451.6"/>
    <property type="gene ID" value="ENSMUSG00000010307.8"/>
</dbReference>
<dbReference type="GeneID" id="67893"/>
<dbReference type="KEGG" id="mmu:67893"/>
<dbReference type="UCSC" id="uc009gzy.1">
    <property type="organism name" value="mouse"/>
</dbReference>
<dbReference type="AGR" id="MGI:1915143"/>
<dbReference type="CTD" id="144110"/>
<dbReference type="MGI" id="MGI:1915143">
    <property type="gene designation" value="Tmem86a"/>
</dbReference>
<dbReference type="VEuPathDB" id="HostDB:ENSMUSG00000010307"/>
<dbReference type="eggNOG" id="KOG4804">
    <property type="taxonomic scope" value="Eukaryota"/>
</dbReference>
<dbReference type="GeneTree" id="ENSGT00390000007101"/>
<dbReference type="HOGENOM" id="CLU_079086_1_1_1"/>
<dbReference type="InParanoid" id="Q9D8N3"/>
<dbReference type="OMA" id="LMFGITH"/>
<dbReference type="OrthoDB" id="2133758at2759"/>
<dbReference type="PhylomeDB" id="Q9D8N3"/>
<dbReference type="TreeFam" id="TF324663"/>
<dbReference type="BioGRID-ORCS" id="67893">
    <property type="hits" value="3 hits in 77 CRISPR screens"/>
</dbReference>
<dbReference type="ChiTaRS" id="Tmem86a">
    <property type="organism name" value="mouse"/>
</dbReference>
<dbReference type="PRO" id="PR:Q9D8N3"/>
<dbReference type="Proteomes" id="UP000000589">
    <property type="component" value="Chromosome 7"/>
</dbReference>
<dbReference type="RNAct" id="Q9D8N3">
    <property type="molecule type" value="protein"/>
</dbReference>
<dbReference type="Bgee" id="ENSMUSG00000010307">
    <property type="expression patterns" value="Expressed in cumulus cell and 222 other cell types or tissues"/>
</dbReference>
<dbReference type="GO" id="GO:0005789">
    <property type="term" value="C:endoplasmic reticulum membrane"/>
    <property type="evidence" value="ECO:0000314"/>
    <property type="project" value="UniProtKB"/>
</dbReference>
<dbReference type="GO" id="GO:0047408">
    <property type="term" value="F:alkenylglycerophosphocholine hydrolase activity"/>
    <property type="evidence" value="ECO:0000315"/>
    <property type="project" value="UniProtKB"/>
</dbReference>
<dbReference type="GO" id="GO:0006629">
    <property type="term" value="P:lipid metabolic process"/>
    <property type="evidence" value="ECO:0007669"/>
    <property type="project" value="UniProtKB-KW"/>
</dbReference>
<dbReference type="InterPro" id="IPR012506">
    <property type="entry name" value="TMEM86B-like"/>
</dbReference>
<dbReference type="PANTHER" id="PTHR31885">
    <property type="entry name" value="GH04784P"/>
    <property type="match status" value="1"/>
</dbReference>
<dbReference type="PANTHER" id="PTHR31885:SF9">
    <property type="entry name" value="LYSOPLASMALOGENASE-LIKE PROTEIN TMEM86A"/>
    <property type="match status" value="1"/>
</dbReference>
<dbReference type="Pfam" id="PF07947">
    <property type="entry name" value="YhhN"/>
    <property type="match status" value="1"/>
</dbReference>
<feature type="chain" id="PRO_0000201839" description="Lysoplasmalogenase TMEM86A">
    <location>
        <begin position="1"/>
        <end position="241"/>
    </location>
</feature>
<feature type="topological domain" description="Cytoplasmic" evidence="4">
    <location>
        <begin position="1"/>
        <end position="13"/>
    </location>
</feature>
<feature type="transmembrane region" description="Helical" evidence="1">
    <location>
        <begin position="14"/>
        <end position="30"/>
    </location>
</feature>
<feature type="topological domain" description="Extracellular" evidence="4">
    <location>
        <begin position="31"/>
        <end position="36"/>
    </location>
</feature>
<feature type="transmembrane region" description="Helical" evidence="1">
    <location>
        <begin position="37"/>
        <end position="59"/>
    </location>
</feature>
<feature type="topological domain" description="Cytoplasmic" evidence="4">
    <location>
        <begin position="60"/>
        <end position="67"/>
    </location>
</feature>
<feature type="transmembrane region" description="Helical" evidence="1">
    <location>
        <begin position="68"/>
        <end position="87"/>
    </location>
</feature>
<feature type="topological domain" description="Extracellular" evidence="4">
    <location>
        <begin position="88"/>
        <end position="96"/>
    </location>
</feature>
<feature type="transmembrane region" description="Helical" evidence="1">
    <location>
        <begin position="97"/>
        <end position="113"/>
    </location>
</feature>
<feature type="topological domain" description="Cytoplasmic" evidence="4">
    <location>
        <begin position="114"/>
        <end position="119"/>
    </location>
</feature>
<feature type="transmembrane region" description="Helical" evidence="1">
    <location>
        <begin position="120"/>
        <end position="136"/>
    </location>
</feature>
<feature type="topological domain" description="Extracellular" evidence="4">
    <location>
        <begin position="137"/>
        <end position="142"/>
    </location>
</feature>
<feature type="transmembrane region" description="Helical" evidence="1">
    <location>
        <begin position="143"/>
        <end position="159"/>
    </location>
</feature>
<feature type="topological domain" description="Cytoplasmic" evidence="4">
    <location>
        <begin position="160"/>
        <end position="176"/>
    </location>
</feature>
<feature type="transmembrane region" description="Helical" evidence="1">
    <location>
        <begin position="177"/>
        <end position="195"/>
    </location>
</feature>
<feature type="topological domain" description="Extracellular" evidence="4">
    <location>
        <begin position="196"/>
        <end position="206"/>
    </location>
</feature>
<feature type="transmembrane region" description="Helical" evidence="1">
    <location>
        <begin position="207"/>
        <end position="225"/>
    </location>
</feature>
<feature type="topological domain" description="Cytoplasmic" evidence="4">
    <location>
        <begin position="226"/>
        <end position="241"/>
    </location>
</feature>
<feature type="mutagenesis site" description="Reduced lysoplasmalogenase activity." evidence="2">
    <original>D</original>
    <variation>V</variation>
    <location>
        <position position="82"/>
    </location>
</feature>
<feature type="mutagenesis site" description="Reduced lysoplasmalogenase activity." evidence="3">
    <original>H</original>
    <variation>L</variation>
    <location>
        <position position="104"/>
    </location>
</feature>
<feature type="mutagenesis site" description="Reduced lysoplasmalogenase activity." evidence="2 3">
    <original>D</original>
    <variation>V</variation>
    <location>
        <position position="190"/>
    </location>
</feature>
<feature type="sequence conflict" description="In Ref. 1; BAC35840." evidence="4" ref="1">
    <original>W</original>
    <variation>L</variation>
    <location>
        <position position="29"/>
    </location>
</feature>
<gene>
    <name type="primary">Tmem86a</name>
</gene>
<proteinExistence type="evidence at protein level"/>
<protein>
    <recommendedName>
        <fullName>Lysoplasmalogenase TMEM86A</fullName>
        <ecNumber evidence="3">3.3.2.2</ecNumber>
    </recommendedName>
    <alternativeName>
        <fullName>Transmembrane protein 86A</fullName>
    </alternativeName>
</protein>
<name>TM86A_MOUSE</name>
<sequence length="241" mass="26273">MVSPVTVVKSEGPKLVPFFKATCVYFVLWLPSSSPSWVSALIKCLPIFCLWLFLLAHGVRFLLAHPSASLIFVGLVFSAVGDAFLIWQDHGYFEHGLLMFAVAHILYAAAFGMRPLALRTGLVIGVLSGLCYALLYPGLSGAFTYLVGVYVALISFMGWRAMAGLRLVGAAWRWTELAAGGGALLFILSDLTIALNKFCFPVPYSRALIMSTYYAAQMLIALSAVESREPVGEDYRLSKAD</sequence>
<organism>
    <name type="scientific">Mus musculus</name>
    <name type="common">Mouse</name>
    <dbReference type="NCBI Taxonomy" id="10090"/>
    <lineage>
        <taxon>Eukaryota</taxon>
        <taxon>Metazoa</taxon>
        <taxon>Chordata</taxon>
        <taxon>Craniata</taxon>
        <taxon>Vertebrata</taxon>
        <taxon>Euteleostomi</taxon>
        <taxon>Mammalia</taxon>
        <taxon>Eutheria</taxon>
        <taxon>Euarchontoglires</taxon>
        <taxon>Glires</taxon>
        <taxon>Rodentia</taxon>
        <taxon>Myomorpha</taxon>
        <taxon>Muroidea</taxon>
        <taxon>Muridae</taxon>
        <taxon>Murinae</taxon>
        <taxon>Mus</taxon>
        <taxon>Mus</taxon>
    </lineage>
</organism>
<accession>Q9D8N3</accession>
<accession>Q8C6I3</accession>
<keyword id="KW-0256">Endoplasmic reticulum</keyword>
<keyword id="KW-0378">Hydrolase</keyword>
<keyword id="KW-0443">Lipid metabolism</keyword>
<keyword id="KW-0472">Membrane</keyword>
<keyword id="KW-1185">Reference proteome</keyword>
<keyword id="KW-0812">Transmembrane</keyword>
<keyword id="KW-1133">Transmembrane helix</keyword>